<accession>Q6XYY0</accession>
<gene>
    <name evidence="1" type="primary">rplP</name>
</gene>
<keyword id="KW-0687">Ribonucleoprotein</keyword>
<keyword id="KW-0689">Ribosomal protein</keyword>
<keyword id="KW-0694">RNA-binding</keyword>
<keyword id="KW-0699">rRNA-binding</keyword>
<keyword id="KW-0820">tRNA-binding</keyword>
<comment type="function">
    <text evidence="1">Binds 23S rRNA and is also seen to make contacts with the A and possibly P site tRNAs.</text>
</comment>
<comment type="subunit">
    <text evidence="1">Part of the 50S ribosomal subunit.</text>
</comment>
<comment type="similarity">
    <text evidence="1">Belongs to the universal ribosomal protein uL16 family.</text>
</comment>
<organism>
    <name type="scientific">Spiroplasma kunkelii</name>
    <dbReference type="NCBI Taxonomy" id="47834"/>
    <lineage>
        <taxon>Bacteria</taxon>
        <taxon>Bacillati</taxon>
        <taxon>Mycoplasmatota</taxon>
        <taxon>Mollicutes</taxon>
        <taxon>Entomoplasmatales</taxon>
        <taxon>Spiroplasmataceae</taxon>
        <taxon>Spiroplasma</taxon>
    </lineage>
</organism>
<protein>
    <recommendedName>
        <fullName evidence="1">Large ribosomal subunit protein uL16</fullName>
    </recommendedName>
    <alternativeName>
        <fullName evidence="2">50S ribosomal protein L16</fullName>
    </alternativeName>
</protein>
<feature type="chain" id="PRO_0000062202" description="Large ribosomal subunit protein uL16">
    <location>
        <begin position="1"/>
        <end position="137"/>
    </location>
</feature>
<proteinExistence type="inferred from homology"/>
<sequence>MLLPKRTKYRRPHRIKYEGKAKGNTKVDFGEFGLKSLDGAWITNRQIEAARIAMTRYMKRWGKVWIRIFPHMAKTKKPLEVRMGSGKGSPEEWVAVVKTGTVMFEVAGVSEETALEALRLAMHKLPVRCKIVKKGEE</sequence>
<reference key="1">
    <citation type="journal article" date="2003" name="Mol. Genet. Genomics">
        <title>Gene content and organization of an 85-kb DNA segment from the genome of the phytopathogenic mollicute Spiroplasma kunkelii.</title>
        <authorList>
            <person name="Zhao Y."/>
            <person name="Hammond R.W."/>
            <person name="Jomantiene R."/>
            <person name="Dally E.L."/>
            <person name="Lee I.-M."/>
            <person name="Jia H."/>
            <person name="Wu H."/>
            <person name="Lin S."/>
            <person name="Zhang P."/>
            <person name="Kenton S."/>
            <person name="Najar F.Z."/>
            <person name="Hua A."/>
            <person name="Roe B.A."/>
            <person name="Fletcher J."/>
            <person name="Davis R.E."/>
        </authorList>
    </citation>
    <scope>NUCLEOTIDE SEQUENCE [GENOMIC DNA]</scope>
    <source>
        <strain>CR2-3x</strain>
    </source>
</reference>
<dbReference type="EMBL" id="AY198133">
    <property type="protein sequence ID" value="AAP58898.1"/>
    <property type="molecule type" value="Genomic_DNA"/>
</dbReference>
<dbReference type="SMR" id="Q6XYY0"/>
<dbReference type="GO" id="GO:0022625">
    <property type="term" value="C:cytosolic large ribosomal subunit"/>
    <property type="evidence" value="ECO:0007669"/>
    <property type="project" value="TreeGrafter"/>
</dbReference>
<dbReference type="GO" id="GO:0019843">
    <property type="term" value="F:rRNA binding"/>
    <property type="evidence" value="ECO:0007669"/>
    <property type="project" value="UniProtKB-UniRule"/>
</dbReference>
<dbReference type="GO" id="GO:0003735">
    <property type="term" value="F:structural constituent of ribosome"/>
    <property type="evidence" value="ECO:0007669"/>
    <property type="project" value="InterPro"/>
</dbReference>
<dbReference type="GO" id="GO:0000049">
    <property type="term" value="F:tRNA binding"/>
    <property type="evidence" value="ECO:0007669"/>
    <property type="project" value="UniProtKB-KW"/>
</dbReference>
<dbReference type="GO" id="GO:0006412">
    <property type="term" value="P:translation"/>
    <property type="evidence" value="ECO:0007669"/>
    <property type="project" value="UniProtKB-UniRule"/>
</dbReference>
<dbReference type="CDD" id="cd01433">
    <property type="entry name" value="Ribosomal_L16_L10e"/>
    <property type="match status" value="1"/>
</dbReference>
<dbReference type="FunFam" id="3.90.1170.10:FF:000001">
    <property type="entry name" value="50S ribosomal protein L16"/>
    <property type="match status" value="1"/>
</dbReference>
<dbReference type="Gene3D" id="3.90.1170.10">
    <property type="entry name" value="Ribosomal protein L10e/L16"/>
    <property type="match status" value="1"/>
</dbReference>
<dbReference type="HAMAP" id="MF_01342">
    <property type="entry name" value="Ribosomal_uL16"/>
    <property type="match status" value="1"/>
</dbReference>
<dbReference type="InterPro" id="IPR047873">
    <property type="entry name" value="Ribosomal_uL16"/>
</dbReference>
<dbReference type="InterPro" id="IPR000114">
    <property type="entry name" value="Ribosomal_uL16_bact-type"/>
</dbReference>
<dbReference type="InterPro" id="IPR020798">
    <property type="entry name" value="Ribosomal_uL16_CS"/>
</dbReference>
<dbReference type="InterPro" id="IPR016180">
    <property type="entry name" value="Ribosomal_uL16_dom"/>
</dbReference>
<dbReference type="InterPro" id="IPR036920">
    <property type="entry name" value="Ribosomal_uL16_sf"/>
</dbReference>
<dbReference type="NCBIfam" id="TIGR01164">
    <property type="entry name" value="rplP_bact"/>
    <property type="match status" value="1"/>
</dbReference>
<dbReference type="PANTHER" id="PTHR12220">
    <property type="entry name" value="50S/60S RIBOSOMAL PROTEIN L16"/>
    <property type="match status" value="1"/>
</dbReference>
<dbReference type="PANTHER" id="PTHR12220:SF13">
    <property type="entry name" value="LARGE RIBOSOMAL SUBUNIT PROTEIN UL16M"/>
    <property type="match status" value="1"/>
</dbReference>
<dbReference type="Pfam" id="PF00252">
    <property type="entry name" value="Ribosomal_L16"/>
    <property type="match status" value="1"/>
</dbReference>
<dbReference type="PRINTS" id="PR00060">
    <property type="entry name" value="RIBOSOMALL16"/>
</dbReference>
<dbReference type="SUPFAM" id="SSF54686">
    <property type="entry name" value="Ribosomal protein L16p/L10e"/>
    <property type="match status" value="1"/>
</dbReference>
<dbReference type="PROSITE" id="PS00586">
    <property type="entry name" value="RIBOSOMAL_L16_1"/>
    <property type="match status" value="1"/>
</dbReference>
<dbReference type="PROSITE" id="PS00701">
    <property type="entry name" value="RIBOSOMAL_L16_2"/>
    <property type="match status" value="1"/>
</dbReference>
<name>RL16_SPIKU</name>
<evidence type="ECO:0000255" key="1">
    <source>
        <dbReference type="HAMAP-Rule" id="MF_01342"/>
    </source>
</evidence>
<evidence type="ECO:0000305" key="2"/>